<name>GPR4_CALMI</name>
<feature type="chain" id="PRO_0000462462" description="G-protein coupled receptor 4">
    <location>
        <begin position="1"/>
        <end position="364"/>
    </location>
</feature>
<feature type="topological domain" description="Extracellular" evidence="1">
    <location>
        <begin position="1"/>
        <end position="8"/>
    </location>
</feature>
<feature type="transmembrane region" description="Helical; Name=1" evidence="1">
    <location>
        <begin position="9"/>
        <end position="45"/>
    </location>
</feature>
<feature type="topological domain" description="Cytoplasmic" evidence="1">
    <location>
        <begin position="46"/>
        <end position="49"/>
    </location>
</feature>
<feature type="transmembrane region" description="Helical; Name=2" evidence="1">
    <location>
        <begin position="50"/>
        <end position="80"/>
    </location>
</feature>
<feature type="topological domain" description="Extracellular" evidence="1">
    <location>
        <begin position="81"/>
        <end position="85"/>
    </location>
</feature>
<feature type="transmembrane region" description="Helical; Name=3" evidence="1">
    <location>
        <begin position="86"/>
        <end position="121"/>
    </location>
</feature>
<feature type="topological domain" description="Cytoplasmic" evidence="1">
    <location>
        <begin position="122"/>
        <end position="129"/>
    </location>
</feature>
<feature type="transmembrane region" description="Helical; Name=4" evidence="1">
    <location>
        <begin position="130"/>
        <end position="156"/>
    </location>
</feature>
<feature type="topological domain" description="Extracellular" evidence="1">
    <location>
        <begin position="157"/>
        <end position="172"/>
    </location>
</feature>
<feature type="transmembrane region" description="Helical; Name=5" evidence="1">
    <location>
        <begin position="173"/>
        <end position="210"/>
    </location>
</feature>
<feature type="topological domain" description="Cytoplasmic" evidence="1">
    <location>
        <begin position="211"/>
        <end position="214"/>
    </location>
</feature>
<feature type="transmembrane region" description="Helical; Name=6" evidence="1">
    <location>
        <begin position="215"/>
        <end position="250"/>
    </location>
</feature>
<feature type="topological domain" description="Extracellular" evidence="1">
    <location>
        <begin position="251"/>
        <end position="260"/>
    </location>
</feature>
<feature type="transmembrane region" description="Helical; Name=7" evidence="1">
    <location>
        <begin position="261"/>
        <end position="289"/>
    </location>
</feature>
<feature type="topological domain" description="Cytoplasmic" evidence="1">
    <location>
        <begin position="290"/>
        <end position="364"/>
    </location>
</feature>
<feature type="region of interest" description="Extracellular loop 2 (ECL2)" evidence="2">
    <location>
        <begin position="157"/>
        <end position="172"/>
    </location>
</feature>
<feature type="site" description="Required for activation" evidence="2">
    <location>
        <position position="145"/>
    </location>
</feature>
<feature type="site" description="Proton sensing" evidence="2">
    <location>
        <position position="155"/>
    </location>
</feature>
<feature type="site" description="Proton sensing" evidence="2">
    <location>
        <position position="165"/>
    </location>
</feature>
<feature type="site" description="Proton sensing" evidence="2">
    <location>
        <position position="269"/>
    </location>
</feature>
<feature type="glycosylation site" description="N-linked (GlcNAc...) asparagine" evidence="4">
    <location>
        <position position="3"/>
    </location>
</feature>
<feature type="glycosylation site" description="N-linked (GlcNAc...) asparagine" evidence="4">
    <location>
        <position position="164"/>
    </location>
</feature>
<feature type="disulfide bond" evidence="1">
    <location>
        <begin position="9"/>
        <end position="258"/>
    </location>
</feature>
<feature type="disulfide bond" evidence="5">
    <location>
        <begin position="90"/>
        <end position="168"/>
    </location>
</feature>
<feature type="mutagenesis site" description="Decreased proton-induced G-protein coupled receptor activity." evidence="6">
    <original>E</original>
    <variation>A</variation>
    <location>
        <position position="51"/>
    </location>
</feature>
<feature type="mutagenesis site" description="Decreased proton-induced G-protein coupled receptor activity." evidence="6">
    <original>V</original>
    <variation>A</variation>
    <location>
        <position position="119"/>
    </location>
</feature>
<feature type="mutagenesis site" description="Decreased proton-induced G-protein coupled receptor activity." evidence="6">
    <original>P</original>
    <variation>A</variation>
    <location>
        <position position="122"/>
    </location>
</feature>
<feature type="mutagenesis site" description="Decreased proton-induced G-protein coupled receptor activity." evidence="6">
    <original>L</original>
    <variation>A</variation>
    <location>
        <position position="123"/>
    </location>
</feature>
<keyword id="KW-1003">Cell membrane</keyword>
<keyword id="KW-1015">Disulfide bond</keyword>
<keyword id="KW-0297">G-protein coupled receptor</keyword>
<keyword id="KW-0325">Glycoprotein</keyword>
<keyword id="KW-0472">Membrane</keyword>
<keyword id="KW-0675">Receptor</keyword>
<keyword id="KW-1185">Reference proteome</keyword>
<keyword id="KW-0807">Transducer</keyword>
<keyword id="KW-0812">Transmembrane</keyword>
<keyword id="KW-1133">Transmembrane helix</keyword>
<evidence type="ECO:0000250" key="1">
    <source>
        <dbReference type="UniProtKB" id="A0A6I8PUB9"/>
    </source>
</evidence>
<evidence type="ECO:0000250" key="2">
    <source>
        <dbReference type="UniProtKB" id="P46093"/>
    </source>
</evidence>
<evidence type="ECO:0000255" key="3"/>
<evidence type="ECO:0000255" key="4">
    <source>
        <dbReference type="PROSITE-ProRule" id="PRU00498"/>
    </source>
</evidence>
<evidence type="ECO:0000255" key="5">
    <source>
        <dbReference type="PROSITE-ProRule" id="PRU00521"/>
    </source>
</evidence>
<evidence type="ECO:0000269" key="6">
    <source>
    </source>
</evidence>
<evidence type="ECO:0000303" key="7">
    <source>
    </source>
</evidence>
<evidence type="ECO:0000305" key="8"/>
<gene>
    <name evidence="7" type="primary">gpr4</name>
</gene>
<dbReference type="Ensembl" id="ENSCMIT00000002503.1">
    <property type="protein sequence ID" value="ENSCMIP00000002416.1"/>
    <property type="gene ID" value="ENSCMIG00000001432.1"/>
</dbReference>
<dbReference type="GeneTree" id="ENSGT01130000278337"/>
<dbReference type="InParanoid" id="A0A4W3GG95"/>
<dbReference type="OMA" id="RTWEGCH"/>
<dbReference type="Proteomes" id="UP000314986">
    <property type="component" value="Unassembled WGS sequence"/>
</dbReference>
<dbReference type="GO" id="GO:0005886">
    <property type="term" value="C:plasma membrane"/>
    <property type="evidence" value="ECO:0007669"/>
    <property type="project" value="UniProtKB-SubCell"/>
</dbReference>
<dbReference type="GO" id="GO:0004930">
    <property type="term" value="F:G protein-coupled receptor activity"/>
    <property type="evidence" value="ECO:0000314"/>
    <property type="project" value="UniProtKB"/>
</dbReference>
<dbReference type="GO" id="GO:0007189">
    <property type="term" value="P:adenylate cyclase-activating G protein-coupled receptor signaling pathway"/>
    <property type="evidence" value="ECO:0000314"/>
    <property type="project" value="UniProtKB"/>
</dbReference>
<dbReference type="GO" id="GO:0071468">
    <property type="term" value="P:cellular response to acidic pH"/>
    <property type="evidence" value="ECO:0000314"/>
    <property type="project" value="UniProtKB"/>
</dbReference>
<dbReference type="CDD" id="cd15366">
    <property type="entry name" value="7tmA_GPR4"/>
    <property type="match status" value="1"/>
</dbReference>
<dbReference type="FunFam" id="1.20.1070.10:FF:000065">
    <property type="entry name" value="G-protein coupled receptor 4"/>
    <property type="match status" value="1"/>
</dbReference>
<dbReference type="Gene3D" id="1.20.1070.10">
    <property type="entry name" value="Rhodopsin 7-helix transmembrane proteins"/>
    <property type="match status" value="1"/>
</dbReference>
<dbReference type="InterPro" id="IPR000276">
    <property type="entry name" value="GPCR_Rhodpsn"/>
</dbReference>
<dbReference type="InterPro" id="IPR017452">
    <property type="entry name" value="GPCR_Rhodpsn_7TM"/>
</dbReference>
<dbReference type="InterPro" id="IPR002276">
    <property type="entry name" value="GPR4_orph"/>
</dbReference>
<dbReference type="PANTHER" id="PTHR24234:SF10">
    <property type="entry name" value="G-PROTEIN COUPLED RECEPTOR 4"/>
    <property type="match status" value="1"/>
</dbReference>
<dbReference type="PANTHER" id="PTHR24234">
    <property type="entry name" value="LYSOPHOSPHATIDIC ACID RECEPTOR 5/SPHINGOSYLPHOSPHORYLCHOLINE RECEPTOR"/>
    <property type="match status" value="1"/>
</dbReference>
<dbReference type="Pfam" id="PF00001">
    <property type="entry name" value="7tm_1"/>
    <property type="match status" value="1"/>
</dbReference>
<dbReference type="PRINTS" id="PR00237">
    <property type="entry name" value="GPCRRHODOPSN"/>
</dbReference>
<dbReference type="PRINTS" id="PR01147">
    <property type="entry name" value="GPR4RECEPTOR"/>
</dbReference>
<dbReference type="SUPFAM" id="SSF81321">
    <property type="entry name" value="Family A G protein-coupled receptor-like"/>
    <property type="match status" value="1"/>
</dbReference>
<dbReference type="PROSITE" id="PS00237">
    <property type="entry name" value="G_PROTEIN_RECEP_F1_1"/>
    <property type="match status" value="1"/>
</dbReference>
<dbReference type="PROSITE" id="PS50262">
    <property type="entry name" value="G_PROTEIN_RECEP_F1_2"/>
    <property type="match status" value="1"/>
</dbReference>
<comment type="function">
    <text evidence="1 6">Proton-sensing G-protein coupled receptor activated by extracellular pH, which is required to monitor pH changes and generate adaptive reactions (PubMed:39753131). Ligand binding causes a conformation change that triggers signaling via guanine nucleotide-binding proteins (G proteins) and modulates the activity of downstream effectors, such as adenylate cyclase (By similarity).</text>
</comment>
<comment type="activity regulation">
    <text evidence="2">Activated by a network of residues that connects an extracellular-facing cavity to Glu-145, a conserved charged residue buried in the transmembrane core of the receptor. Protonation likely drives conformational changes in extracellular loop 2 (ECL2), which stabilizes movement of transmembrane 3 (TM3) and a series of rearrangements that connect the extracellular-facing cavity to Glu-145, a residue only conserved in proton-sensing G-protein coupled receptors.</text>
</comment>
<comment type="subcellular location">
    <subcellularLocation>
        <location evidence="2">Cell membrane</location>
        <topology evidence="3">Multi-pass membrane protein</topology>
    </subcellularLocation>
</comment>
<comment type="domain">
    <text evidence="2">A multitude of proton-sensing residues, which include extracellular histidine residues or triad of buried acidic residues, contribute to activation of the G-protein coupled receptor activity and pH sensitivity.</text>
</comment>
<comment type="similarity">
    <text evidence="8">Belongs to the G-protein coupled receptor 1 family.</text>
</comment>
<protein>
    <recommendedName>
        <fullName evidence="8">G-protein coupled receptor 4</fullName>
        <shortName evidence="7">cmGPR4</shortName>
    </recommendedName>
</protein>
<accession>A0A4W3GG95</accession>
<reference key="1">
    <citation type="journal article" date="2006" name="Science">
        <title>Ancient noncoding elements conserved in the human genome.</title>
        <authorList>
            <person name="Venkatesh B."/>
            <person name="Kirkness E.F."/>
            <person name="Loh Y.H."/>
            <person name="Halpern A.L."/>
            <person name="Lee A.P."/>
            <person name="Johnson J."/>
            <person name="Dandona N."/>
            <person name="Viswanathan L.D."/>
            <person name="Tay A."/>
            <person name="Venter J.C."/>
            <person name="Strausberg R.L."/>
            <person name="Brenner S."/>
        </authorList>
    </citation>
    <scope>NUCLEOTIDE SEQUENCE [LARGE SCALE GENOMIC DNA]</scope>
</reference>
<reference key="2">
    <citation type="journal article" date="2025" name="Cell">
        <title>Evolutionary study and structural basis of proton sensing by Mus GPR4 and Xenopus GPR4.</title>
        <authorList>
            <person name="Wen X."/>
            <person name="Shang P."/>
            <person name="Chen H."/>
            <person name="Guo L."/>
            <person name="Rong N."/>
            <person name="Jiang X."/>
            <person name="Li X."/>
            <person name="Liu J."/>
            <person name="Yang G."/>
            <person name="Zhang J."/>
            <person name="Zhu K."/>
            <person name="Meng Q."/>
            <person name="He X."/>
            <person name="Wang Z."/>
            <person name="Liu Z."/>
            <person name="Cheng H."/>
            <person name="Zheng Y."/>
            <person name="Zhang B."/>
            <person name="Pang J."/>
            <person name="Liu Z."/>
            <person name="Xiao P."/>
            <person name="Chen Y."/>
            <person name="Liu L."/>
            <person name="Luo F."/>
            <person name="Yu X."/>
            <person name="Yi F."/>
            <person name="Zhang P."/>
            <person name="Yang F."/>
            <person name="Deng C."/>
            <person name="Sun J.P."/>
        </authorList>
    </citation>
    <scope>FUNCTION</scope>
    <scope>MUTAGENESIS OF GLU-51; VAL-119; PRO-122 AND LEU-123</scope>
</reference>
<organism>
    <name type="scientific">Callorhinchus milii</name>
    <name type="common">Ghost shark</name>
    <dbReference type="NCBI Taxonomy" id="7868"/>
    <lineage>
        <taxon>Eukaryota</taxon>
        <taxon>Metazoa</taxon>
        <taxon>Chordata</taxon>
        <taxon>Craniata</taxon>
        <taxon>Vertebrata</taxon>
        <taxon>Chondrichthyes</taxon>
        <taxon>Holocephali</taxon>
        <taxon>Chimaeriformes</taxon>
        <taxon>Callorhinchidae</taxon>
        <taxon>Callorhinchus</taxon>
    </lineage>
</organism>
<sequence>MCNVSQDSCNIDSRLDSLFPPTLYIFVMVIGFPTNCLSLWAAFVQVRQKNELGVYLLNLSISDLLYIATLPPWVNYFLHQDNWIHGPESCKLFGFILYTNIYISIGFLSCISVDRYLAVAHPLKFAKVRRVKTAAVVSAVVWAIEIGANSAPLFHNELFEDRFNHTFCFEKYPMEDWVAQMNLYRVFVGFLFPWVLMLFCYQGILRAVKTNVSTEREEKAKIKRLALSLIAILLFCFAPYHLILLSRSVVYLGQPCDCTFEENIFTAYHVSLALTSLNCVADPILYCLANEGARSEVTRGLAPLMKFFSASRPNMDSFARSVTLDTPWSSRRAAAPSPRSWSLCGQTGGRGRRSRVRRRRDCKC</sequence>
<proteinExistence type="evidence at protein level"/>